<feature type="chain" id="PRO_1000013690" description="S-adenosylmethionine decarboxylase beta chain" evidence="1">
    <location>
        <begin position="1"/>
        <end position="112"/>
    </location>
</feature>
<feature type="chain" id="PRO_0000315016" description="S-adenosylmethionine decarboxylase alpha chain" evidence="1">
    <location>
        <begin position="113"/>
        <end position="264"/>
    </location>
</feature>
<feature type="active site" description="Schiff-base intermediate with substrate; via pyruvic acid" evidence="1">
    <location>
        <position position="113"/>
    </location>
</feature>
<feature type="active site" description="Proton acceptor; for processing activity" evidence="1">
    <location>
        <position position="118"/>
    </location>
</feature>
<feature type="active site" description="Proton donor; for catalytic activity" evidence="1">
    <location>
        <position position="141"/>
    </location>
</feature>
<feature type="site" description="Cleavage (non-hydrolytic); by autolysis" evidence="1">
    <location>
        <begin position="112"/>
        <end position="113"/>
    </location>
</feature>
<feature type="modified residue" description="Pyruvic acid (Ser); by autocatalysis" evidence="1">
    <location>
        <position position="113"/>
    </location>
</feature>
<protein>
    <recommendedName>
        <fullName evidence="1">S-adenosylmethionine decarboxylase proenzyme</fullName>
        <shortName evidence="1">AdoMetDC</shortName>
        <shortName evidence="1">SAMDC</shortName>
        <ecNumber evidence="1">4.1.1.50</ecNumber>
    </recommendedName>
    <component>
        <recommendedName>
            <fullName evidence="1">S-adenosylmethionine decarboxylase beta chain</fullName>
        </recommendedName>
    </component>
    <component>
        <recommendedName>
            <fullName evidence="1">S-adenosylmethionine decarboxylase alpha chain</fullName>
        </recommendedName>
    </component>
</protein>
<comment type="function">
    <text evidence="1">Catalyzes the decarboxylation of S-adenosylmethionine to S-adenosylmethioninamine (dcAdoMet), the propylamine donor required for the synthesis of the polyamines spermine and spermidine from the diamine putrescine.</text>
</comment>
<comment type="catalytic activity">
    <reaction evidence="1">
        <text>S-adenosyl-L-methionine + H(+) = S-adenosyl 3-(methylsulfanyl)propylamine + CO2</text>
        <dbReference type="Rhea" id="RHEA:15981"/>
        <dbReference type="ChEBI" id="CHEBI:15378"/>
        <dbReference type="ChEBI" id="CHEBI:16526"/>
        <dbReference type="ChEBI" id="CHEBI:57443"/>
        <dbReference type="ChEBI" id="CHEBI:59789"/>
        <dbReference type="EC" id="4.1.1.50"/>
    </reaction>
</comment>
<comment type="cofactor">
    <cofactor evidence="1">
        <name>pyruvate</name>
        <dbReference type="ChEBI" id="CHEBI:15361"/>
    </cofactor>
    <text evidence="1">Binds 1 pyruvoyl group covalently per subunit.</text>
</comment>
<comment type="pathway">
    <text evidence="1">Amine and polyamine biosynthesis; S-adenosylmethioninamine biosynthesis; S-adenosylmethioninamine from S-adenosyl-L-methionine: step 1/1.</text>
</comment>
<comment type="subunit">
    <text evidence="1">Heterooctamer of four alpha and four beta chains arranged as a tetramer of alpha/beta heterodimers.</text>
</comment>
<comment type="PTM">
    <text evidence="1">Is synthesized initially as an inactive proenzyme. Formation of the active enzyme involves a self-maturation process in which the active site pyruvoyl group is generated from an internal serine residue via an autocatalytic post-translational modification. Two non-identical subunits are generated from the proenzyme in this reaction, and the pyruvate is formed at the N-terminus of the alpha chain, which is derived from the carboxyl end of the proenzyme. The post-translation cleavage follows an unusual pathway, termed non-hydrolytic serinolysis, in which the side chain hydroxyl group of the serine supplies its oxygen atom to form the C-terminus of the beta chain, while the remainder of the serine residue undergoes an oxidative deamination to produce ammonia and the pyruvoyl group blocking the N-terminus of the alpha chain.</text>
</comment>
<comment type="similarity">
    <text evidence="1">Belongs to the prokaryotic AdoMetDC family. Type 2 subfamily.</text>
</comment>
<dbReference type="EC" id="4.1.1.50" evidence="1"/>
<dbReference type="EMBL" id="CP000744">
    <property type="protein sequence ID" value="ABR83598.1"/>
    <property type="molecule type" value="Genomic_DNA"/>
</dbReference>
<dbReference type="RefSeq" id="WP_003150131.1">
    <property type="nucleotide sequence ID" value="NC_009656.1"/>
</dbReference>
<dbReference type="SMR" id="A6UZF5"/>
<dbReference type="KEGG" id="pap:PSPA7_0795"/>
<dbReference type="HOGENOM" id="CLU_092007_0_0_6"/>
<dbReference type="UniPathway" id="UPA00331">
    <property type="reaction ID" value="UER00451"/>
</dbReference>
<dbReference type="Proteomes" id="UP000001582">
    <property type="component" value="Chromosome"/>
</dbReference>
<dbReference type="GO" id="GO:0005829">
    <property type="term" value="C:cytosol"/>
    <property type="evidence" value="ECO:0007669"/>
    <property type="project" value="TreeGrafter"/>
</dbReference>
<dbReference type="GO" id="GO:0004014">
    <property type="term" value="F:adenosylmethionine decarboxylase activity"/>
    <property type="evidence" value="ECO:0007669"/>
    <property type="project" value="UniProtKB-UniRule"/>
</dbReference>
<dbReference type="GO" id="GO:0008295">
    <property type="term" value="P:spermidine biosynthetic process"/>
    <property type="evidence" value="ECO:0007669"/>
    <property type="project" value="UniProtKB-UniRule"/>
</dbReference>
<dbReference type="FunFam" id="3.60.90.10:FF:000001">
    <property type="entry name" value="S-adenosylmethionine decarboxylase proenzyme"/>
    <property type="match status" value="1"/>
</dbReference>
<dbReference type="Gene3D" id="3.60.90.10">
    <property type="entry name" value="S-adenosylmethionine decarboxylase"/>
    <property type="match status" value="1"/>
</dbReference>
<dbReference type="HAMAP" id="MF_00465">
    <property type="entry name" value="AdoMetDC_2"/>
    <property type="match status" value="1"/>
</dbReference>
<dbReference type="InterPro" id="IPR003826">
    <property type="entry name" value="AdoMetDC_fam_prok"/>
</dbReference>
<dbReference type="InterPro" id="IPR009165">
    <property type="entry name" value="S-AdoMet_deCO2ase_bac"/>
</dbReference>
<dbReference type="InterPro" id="IPR016067">
    <property type="entry name" value="S-AdoMet_deCO2ase_core"/>
</dbReference>
<dbReference type="NCBIfam" id="TIGR03331">
    <property type="entry name" value="SAM_DCase_Eco"/>
    <property type="match status" value="1"/>
</dbReference>
<dbReference type="PANTHER" id="PTHR33866">
    <property type="entry name" value="S-ADENOSYLMETHIONINE DECARBOXYLASE PROENZYME"/>
    <property type="match status" value="1"/>
</dbReference>
<dbReference type="PANTHER" id="PTHR33866:SF1">
    <property type="entry name" value="S-ADENOSYLMETHIONINE DECARBOXYLASE PROENZYME"/>
    <property type="match status" value="1"/>
</dbReference>
<dbReference type="Pfam" id="PF02675">
    <property type="entry name" value="AdoMet_dc"/>
    <property type="match status" value="1"/>
</dbReference>
<dbReference type="PIRSF" id="PIRSF001356">
    <property type="entry name" value="SAM_decarboxylas"/>
    <property type="match status" value="1"/>
</dbReference>
<dbReference type="SUPFAM" id="SSF56276">
    <property type="entry name" value="S-adenosylmethionine decarboxylase"/>
    <property type="match status" value="1"/>
</dbReference>
<sequence>MKSKLKLHGFNNLTKTLSFNIYDICYAETPEDLQAYVQYIDEEYDAERLTQILTDVVDIIGANILNIARQDYDPQGASVTILISEQPVTPTDSQIEESPGPLPDTILAHLDKSHITVHTYPEIHPVDGIATFRVDIDVSTCGVISPLKALNYLIHQFDSDIVTVDYRVRGFTRDIEGRKHFIDHEINSIQNYLSDDTREAYQMTDVNVYQENLFHTKMLLKDFELENYLFGDATRNLSAEQREQVTERLRHEMLEIFYARNMPH</sequence>
<proteinExistence type="inferred from homology"/>
<gene>
    <name evidence="1" type="primary">speD</name>
    <name type="ordered locus">PSPA7_0795</name>
</gene>
<evidence type="ECO:0000255" key="1">
    <source>
        <dbReference type="HAMAP-Rule" id="MF_00465"/>
    </source>
</evidence>
<reference key="1">
    <citation type="submission" date="2007-06" db="EMBL/GenBank/DDBJ databases">
        <authorList>
            <person name="Dodson R.J."/>
            <person name="Harkins D."/>
            <person name="Paulsen I.T."/>
        </authorList>
    </citation>
    <scope>NUCLEOTIDE SEQUENCE [LARGE SCALE GENOMIC DNA]</scope>
    <source>
        <strain>DSM 24068 / PA7</strain>
    </source>
</reference>
<accession>A6UZF5</accession>
<name>SPED_PSEP7</name>
<organism>
    <name type="scientific">Pseudomonas paraeruginosa (strain DSM 24068 / PA7)</name>
    <name type="common">Pseudomonas aeruginosa (strain PA7)</name>
    <dbReference type="NCBI Taxonomy" id="381754"/>
    <lineage>
        <taxon>Bacteria</taxon>
        <taxon>Pseudomonadati</taxon>
        <taxon>Pseudomonadota</taxon>
        <taxon>Gammaproteobacteria</taxon>
        <taxon>Pseudomonadales</taxon>
        <taxon>Pseudomonadaceae</taxon>
        <taxon>Pseudomonas</taxon>
        <taxon>Pseudomonas paraeruginosa</taxon>
    </lineage>
</organism>
<keyword id="KW-0068">Autocatalytic cleavage</keyword>
<keyword id="KW-0210">Decarboxylase</keyword>
<keyword id="KW-0456">Lyase</keyword>
<keyword id="KW-0620">Polyamine biosynthesis</keyword>
<keyword id="KW-0670">Pyruvate</keyword>
<keyword id="KW-0949">S-adenosyl-L-methionine</keyword>
<keyword id="KW-0704">Schiff base</keyword>
<keyword id="KW-0745">Spermidine biosynthesis</keyword>
<keyword id="KW-0865">Zymogen</keyword>